<proteinExistence type="evidence at protein level"/>
<sequence length="71" mass="7540">MKLCVTFLLVLVILPSVTGVKSSERTLSGAALRGDRGTCSGRGQECKHDSDCCGHLCCAGITCQFTYIPCK</sequence>
<protein>
    <recommendedName>
        <fullName evidence="6">Conotoxin Tx11.3</fullName>
    </recommendedName>
</protein>
<keyword id="KW-1015">Disulfide bond</keyword>
<keyword id="KW-0964">Secreted</keyword>
<keyword id="KW-0732">Signal</keyword>
<keyword id="KW-0800">Toxin</keyword>
<feature type="signal peptide" evidence="2">
    <location>
        <begin position="1"/>
        <end position="19"/>
    </location>
</feature>
<feature type="propeptide" id="PRO_0000445064" evidence="4">
    <location>
        <begin position="20"/>
        <end position="47"/>
    </location>
</feature>
<feature type="peptide" id="PRO_5007726930" description="Conotoxin Tx11.3" evidence="3">
    <location>
        <begin position="48"/>
        <end position="71"/>
    </location>
</feature>
<feature type="disulfide bond" evidence="1">
    <location>
        <begin position="39"/>
        <end position="53"/>
    </location>
</feature>
<feature type="disulfide bond" evidence="1">
    <location>
        <begin position="46"/>
        <end position="58"/>
    </location>
</feature>
<feature type="disulfide bond" evidence="1">
    <location>
        <begin position="52"/>
        <end position="63"/>
    </location>
</feature>
<feature type="disulfide bond" evidence="1">
    <location>
        <begin position="57"/>
        <end position="70"/>
    </location>
</feature>
<dbReference type="EMBL" id="JX293452">
    <property type="protein sequence ID" value="AGK23192.1"/>
    <property type="molecule type" value="mRNA"/>
</dbReference>
<dbReference type="EMBL" id="JX293528">
    <property type="protein sequence ID" value="AGK23268.1"/>
    <property type="molecule type" value="Genomic_DNA"/>
</dbReference>
<dbReference type="SMR" id="S4UKA9"/>
<dbReference type="GO" id="GO:0005576">
    <property type="term" value="C:extracellular region"/>
    <property type="evidence" value="ECO:0007669"/>
    <property type="project" value="UniProtKB-SubCell"/>
</dbReference>
<dbReference type="GO" id="GO:0090729">
    <property type="term" value="F:toxin activity"/>
    <property type="evidence" value="ECO:0007669"/>
    <property type="project" value="UniProtKB-KW"/>
</dbReference>
<dbReference type="InterPro" id="IPR013141">
    <property type="entry name" value="Conotoxin-I_CS"/>
</dbReference>
<dbReference type="PROSITE" id="PS60019">
    <property type="entry name" value="I_CONOTOXIN"/>
    <property type="match status" value="1"/>
</dbReference>
<organism>
    <name type="scientific">Conus textile</name>
    <name type="common">Cloth-of-gold cone</name>
    <dbReference type="NCBI Taxonomy" id="6494"/>
    <lineage>
        <taxon>Eukaryota</taxon>
        <taxon>Metazoa</taxon>
        <taxon>Spiralia</taxon>
        <taxon>Lophotrochozoa</taxon>
        <taxon>Mollusca</taxon>
        <taxon>Gastropoda</taxon>
        <taxon>Caenogastropoda</taxon>
        <taxon>Neogastropoda</taxon>
        <taxon>Conoidea</taxon>
        <taxon>Conidae</taxon>
        <taxon>Conus</taxon>
        <taxon>Cylinder</taxon>
    </lineage>
</organism>
<comment type="subcellular location">
    <subcellularLocation>
        <location evidence="3">Secreted</location>
    </subcellularLocation>
</comment>
<comment type="tissue specificity">
    <text evidence="5">Expressed by the venom duct.</text>
</comment>
<comment type="domain">
    <text evidence="4">The cysteine framework is XI (C-C-CC-CC-C-C).</text>
</comment>
<comment type="similarity">
    <text evidence="4">Belongs to the I1 superfamily.</text>
</comment>
<evidence type="ECO:0000250" key="1">
    <source>
        <dbReference type="UniProtKB" id="Q7Z094"/>
    </source>
</evidence>
<evidence type="ECO:0000255" key="2"/>
<evidence type="ECO:0000269" key="3">
    <source>
    </source>
</evidence>
<evidence type="ECO:0000305" key="4"/>
<evidence type="ECO:0000305" key="5">
    <source>
    </source>
</evidence>
<evidence type="ECO:0000312" key="6">
    <source>
        <dbReference type="EMBL" id="AGK23268.1"/>
    </source>
</evidence>
<name>I1B3_CONTE</name>
<reference key="1">
    <citation type="journal article" date="2013" name="PLoS ONE">
        <title>Molecular evolution and diversity of conus peptide toxins, as revealed by gene structure and intron sequence analyses.</title>
        <authorList>
            <person name="Wu Y."/>
            <person name="Wang L."/>
            <person name="Zhou M."/>
            <person name="You Y."/>
            <person name="Zhu X."/>
            <person name="Qiang Y."/>
            <person name="Qin M."/>
            <person name="Luo S."/>
            <person name="Ren Z."/>
            <person name="Xu A."/>
        </authorList>
    </citation>
    <scope>NUCLEOTIDE SEQUENCE [GENOMIC DNA / MRNA]</scope>
</reference>
<reference key="2">
    <citation type="journal article" date="2012" name="J. Proteome Res.">
        <title>Constrained de novo sequencing of conotoxins.</title>
        <authorList>
            <person name="Bhatia S."/>
            <person name="Kil Y.J."/>
            <person name="Ueberheide B."/>
            <person name="Chait B.T."/>
            <person name="Tayo L."/>
            <person name="Cruz L."/>
            <person name="Lu B."/>
            <person name="Yates J.R. III"/>
            <person name="Bern M."/>
        </authorList>
    </citation>
    <scope>IDENTIFICATION BY MASS SPECTROMETRY</scope>
    <scope>SUBCELLULAR LOCATION</scope>
    <source>
        <tissue>Venom</tissue>
    </source>
</reference>
<accession>S4UKA9</accession>